<organism>
    <name type="scientific">Staphylococcus carnosus (strain TM300)</name>
    <dbReference type="NCBI Taxonomy" id="396513"/>
    <lineage>
        <taxon>Bacteria</taxon>
        <taxon>Bacillati</taxon>
        <taxon>Bacillota</taxon>
        <taxon>Bacilli</taxon>
        <taxon>Bacillales</taxon>
        <taxon>Staphylococcaceae</taxon>
        <taxon>Staphylococcus</taxon>
    </lineage>
</organism>
<name>SYS_STACT</name>
<proteinExistence type="inferred from homology"/>
<comment type="function">
    <text evidence="1">Catalyzes the attachment of serine to tRNA(Ser). Is also able to aminoacylate tRNA(Sec) with serine, to form the misacylated tRNA L-seryl-tRNA(Sec), which will be further converted into selenocysteinyl-tRNA(Sec).</text>
</comment>
<comment type="catalytic activity">
    <reaction evidence="1">
        <text>tRNA(Ser) + L-serine + ATP = L-seryl-tRNA(Ser) + AMP + diphosphate + H(+)</text>
        <dbReference type="Rhea" id="RHEA:12292"/>
        <dbReference type="Rhea" id="RHEA-COMP:9669"/>
        <dbReference type="Rhea" id="RHEA-COMP:9703"/>
        <dbReference type="ChEBI" id="CHEBI:15378"/>
        <dbReference type="ChEBI" id="CHEBI:30616"/>
        <dbReference type="ChEBI" id="CHEBI:33019"/>
        <dbReference type="ChEBI" id="CHEBI:33384"/>
        <dbReference type="ChEBI" id="CHEBI:78442"/>
        <dbReference type="ChEBI" id="CHEBI:78533"/>
        <dbReference type="ChEBI" id="CHEBI:456215"/>
        <dbReference type="EC" id="6.1.1.11"/>
    </reaction>
</comment>
<comment type="catalytic activity">
    <reaction evidence="1">
        <text>tRNA(Sec) + L-serine + ATP = L-seryl-tRNA(Sec) + AMP + diphosphate + H(+)</text>
        <dbReference type="Rhea" id="RHEA:42580"/>
        <dbReference type="Rhea" id="RHEA-COMP:9742"/>
        <dbReference type="Rhea" id="RHEA-COMP:10128"/>
        <dbReference type="ChEBI" id="CHEBI:15378"/>
        <dbReference type="ChEBI" id="CHEBI:30616"/>
        <dbReference type="ChEBI" id="CHEBI:33019"/>
        <dbReference type="ChEBI" id="CHEBI:33384"/>
        <dbReference type="ChEBI" id="CHEBI:78442"/>
        <dbReference type="ChEBI" id="CHEBI:78533"/>
        <dbReference type="ChEBI" id="CHEBI:456215"/>
        <dbReference type="EC" id="6.1.1.11"/>
    </reaction>
</comment>
<comment type="pathway">
    <text evidence="1">Aminoacyl-tRNA biosynthesis; selenocysteinyl-tRNA(Sec) biosynthesis; L-seryl-tRNA(Sec) from L-serine and tRNA(Sec): step 1/1.</text>
</comment>
<comment type="subunit">
    <text evidence="1">Homodimer. The tRNA molecule binds across the dimer.</text>
</comment>
<comment type="subcellular location">
    <subcellularLocation>
        <location evidence="1">Cytoplasm</location>
    </subcellularLocation>
</comment>
<comment type="domain">
    <text evidence="1">Consists of two distinct domains, a catalytic core and a N-terminal extension that is involved in tRNA binding.</text>
</comment>
<comment type="similarity">
    <text evidence="1">Belongs to the class-II aminoacyl-tRNA synthetase family. Type-1 seryl-tRNA synthetase subfamily.</text>
</comment>
<feature type="chain" id="PRO_1000199504" description="Serine--tRNA ligase">
    <location>
        <begin position="1"/>
        <end position="428"/>
    </location>
</feature>
<feature type="binding site" evidence="1">
    <location>
        <begin position="231"/>
        <end position="233"/>
    </location>
    <ligand>
        <name>L-serine</name>
        <dbReference type="ChEBI" id="CHEBI:33384"/>
    </ligand>
</feature>
<feature type="binding site" evidence="1">
    <location>
        <begin position="262"/>
        <end position="264"/>
    </location>
    <ligand>
        <name>ATP</name>
        <dbReference type="ChEBI" id="CHEBI:30616"/>
    </ligand>
</feature>
<feature type="binding site" evidence="1">
    <location>
        <position position="285"/>
    </location>
    <ligand>
        <name>L-serine</name>
        <dbReference type="ChEBI" id="CHEBI:33384"/>
    </ligand>
</feature>
<feature type="binding site" evidence="1">
    <location>
        <begin position="349"/>
        <end position="352"/>
    </location>
    <ligand>
        <name>ATP</name>
        <dbReference type="ChEBI" id="CHEBI:30616"/>
    </ligand>
</feature>
<feature type="binding site" evidence="1">
    <location>
        <position position="385"/>
    </location>
    <ligand>
        <name>L-serine</name>
        <dbReference type="ChEBI" id="CHEBI:33384"/>
    </ligand>
</feature>
<evidence type="ECO:0000255" key="1">
    <source>
        <dbReference type="HAMAP-Rule" id="MF_00176"/>
    </source>
</evidence>
<keyword id="KW-0030">Aminoacyl-tRNA synthetase</keyword>
<keyword id="KW-0067">ATP-binding</keyword>
<keyword id="KW-0963">Cytoplasm</keyword>
<keyword id="KW-0436">Ligase</keyword>
<keyword id="KW-0547">Nucleotide-binding</keyword>
<keyword id="KW-0648">Protein biosynthesis</keyword>
<keyword id="KW-1185">Reference proteome</keyword>
<sequence>MLDIKLFRNEPDYLKGKVKLRGMDPKVVDEVLELDGKRRELIGKAEEMKAERNRVSNEIAEKKRNKEDADDVIAEMRKLGDDIKEVDTELNEVDEKLQYRLSTIPNVMHDDVPEGDSDEENIEVKKWGTPRQFDFEAKAHWDLIEELGMANFDRAARVSGARFVFLTNEGAQLERALMNYMLTKHTTQHGYTEMMVPQLVNANSMYGTGQLPKFEEDLFKVEKEGLYMIPTAEVPLTNYYREEVLSADQLPGKFTAQSACFRSEAGSAGRDTRGLIRLHQFDKVELVRFEKPEDSWDALEQLTSNAEAILEELELPYRRVILCTGDLGFSSSKTYDLEVWLPSYDEYKEISSCSNMTDFQARRANIRFKRDKDAKPELVHTLNGSGLAVGRTFAAIVENYQNADGSITIPEALVPFMGGKTKIGPATK</sequence>
<accession>B9DPW5</accession>
<dbReference type="EC" id="6.1.1.11" evidence="1"/>
<dbReference type="EMBL" id="AM295250">
    <property type="protein sequence ID" value="CAL29368.1"/>
    <property type="molecule type" value="Genomic_DNA"/>
</dbReference>
<dbReference type="RefSeq" id="WP_015901703.1">
    <property type="nucleotide sequence ID" value="NC_012121.1"/>
</dbReference>
<dbReference type="SMR" id="B9DPW5"/>
<dbReference type="GeneID" id="93794907"/>
<dbReference type="KEGG" id="sca:SCA_2465"/>
<dbReference type="eggNOG" id="COG0172">
    <property type="taxonomic scope" value="Bacteria"/>
</dbReference>
<dbReference type="HOGENOM" id="CLU_023797_1_1_9"/>
<dbReference type="OrthoDB" id="9804647at2"/>
<dbReference type="BioCyc" id="SCAR396513:SCA_RS12385-MONOMER"/>
<dbReference type="UniPathway" id="UPA00906">
    <property type="reaction ID" value="UER00895"/>
</dbReference>
<dbReference type="Proteomes" id="UP000000444">
    <property type="component" value="Chromosome"/>
</dbReference>
<dbReference type="GO" id="GO:0005737">
    <property type="term" value="C:cytoplasm"/>
    <property type="evidence" value="ECO:0007669"/>
    <property type="project" value="UniProtKB-SubCell"/>
</dbReference>
<dbReference type="GO" id="GO:0005524">
    <property type="term" value="F:ATP binding"/>
    <property type="evidence" value="ECO:0007669"/>
    <property type="project" value="UniProtKB-UniRule"/>
</dbReference>
<dbReference type="GO" id="GO:0140096">
    <property type="term" value="F:catalytic activity, acting on a protein"/>
    <property type="evidence" value="ECO:0007669"/>
    <property type="project" value="UniProtKB-ARBA"/>
</dbReference>
<dbReference type="GO" id="GO:0004828">
    <property type="term" value="F:serine-tRNA ligase activity"/>
    <property type="evidence" value="ECO:0007669"/>
    <property type="project" value="UniProtKB-UniRule"/>
</dbReference>
<dbReference type="GO" id="GO:0016740">
    <property type="term" value="F:transferase activity"/>
    <property type="evidence" value="ECO:0007669"/>
    <property type="project" value="UniProtKB-ARBA"/>
</dbReference>
<dbReference type="GO" id="GO:0016260">
    <property type="term" value="P:selenocysteine biosynthetic process"/>
    <property type="evidence" value="ECO:0007669"/>
    <property type="project" value="UniProtKB-UniRule"/>
</dbReference>
<dbReference type="GO" id="GO:0006434">
    <property type="term" value="P:seryl-tRNA aminoacylation"/>
    <property type="evidence" value="ECO:0007669"/>
    <property type="project" value="UniProtKB-UniRule"/>
</dbReference>
<dbReference type="CDD" id="cd00770">
    <property type="entry name" value="SerRS_core"/>
    <property type="match status" value="1"/>
</dbReference>
<dbReference type="Gene3D" id="3.30.930.10">
    <property type="entry name" value="Bira Bifunctional Protein, Domain 2"/>
    <property type="match status" value="1"/>
</dbReference>
<dbReference type="Gene3D" id="1.10.287.40">
    <property type="entry name" value="Serine-tRNA synthetase, tRNA binding domain"/>
    <property type="match status" value="1"/>
</dbReference>
<dbReference type="HAMAP" id="MF_00176">
    <property type="entry name" value="Ser_tRNA_synth_type1"/>
    <property type="match status" value="1"/>
</dbReference>
<dbReference type="InterPro" id="IPR002314">
    <property type="entry name" value="aa-tRNA-synt_IIb"/>
</dbReference>
<dbReference type="InterPro" id="IPR006195">
    <property type="entry name" value="aa-tRNA-synth_II"/>
</dbReference>
<dbReference type="InterPro" id="IPR045864">
    <property type="entry name" value="aa-tRNA-synth_II/BPL/LPL"/>
</dbReference>
<dbReference type="InterPro" id="IPR002317">
    <property type="entry name" value="Ser-tRNA-ligase_type_1"/>
</dbReference>
<dbReference type="InterPro" id="IPR015866">
    <property type="entry name" value="Ser-tRNA-synth_1_N"/>
</dbReference>
<dbReference type="InterPro" id="IPR042103">
    <property type="entry name" value="SerRS_1_N_sf"/>
</dbReference>
<dbReference type="InterPro" id="IPR033729">
    <property type="entry name" value="SerRS_core"/>
</dbReference>
<dbReference type="InterPro" id="IPR010978">
    <property type="entry name" value="tRNA-bd_arm"/>
</dbReference>
<dbReference type="NCBIfam" id="TIGR00414">
    <property type="entry name" value="serS"/>
    <property type="match status" value="1"/>
</dbReference>
<dbReference type="PANTHER" id="PTHR43697:SF1">
    <property type="entry name" value="SERINE--TRNA LIGASE"/>
    <property type="match status" value="1"/>
</dbReference>
<dbReference type="PANTHER" id="PTHR43697">
    <property type="entry name" value="SERYL-TRNA SYNTHETASE"/>
    <property type="match status" value="1"/>
</dbReference>
<dbReference type="Pfam" id="PF02403">
    <property type="entry name" value="Seryl_tRNA_N"/>
    <property type="match status" value="1"/>
</dbReference>
<dbReference type="Pfam" id="PF00587">
    <property type="entry name" value="tRNA-synt_2b"/>
    <property type="match status" value="1"/>
</dbReference>
<dbReference type="PIRSF" id="PIRSF001529">
    <property type="entry name" value="Ser-tRNA-synth_IIa"/>
    <property type="match status" value="1"/>
</dbReference>
<dbReference type="PRINTS" id="PR00981">
    <property type="entry name" value="TRNASYNTHSER"/>
</dbReference>
<dbReference type="SUPFAM" id="SSF55681">
    <property type="entry name" value="Class II aaRS and biotin synthetases"/>
    <property type="match status" value="1"/>
</dbReference>
<dbReference type="SUPFAM" id="SSF46589">
    <property type="entry name" value="tRNA-binding arm"/>
    <property type="match status" value="1"/>
</dbReference>
<dbReference type="PROSITE" id="PS50862">
    <property type="entry name" value="AA_TRNA_LIGASE_II"/>
    <property type="match status" value="1"/>
</dbReference>
<protein>
    <recommendedName>
        <fullName evidence="1">Serine--tRNA ligase</fullName>
        <ecNumber evidence="1">6.1.1.11</ecNumber>
    </recommendedName>
    <alternativeName>
        <fullName evidence="1">Seryl-tRNA synthetase</fullName>
        <shortName evidence="1">SerRS</shortName>
    </alternativeName>
    <alternativeName>
        <fullName evidence="1">Seryl-tRNA(Ser/Sec) synthetase</fullName>
    </alternativeName>
</protein>
<reference key="1">
    <citation type="journal article" date="2009" name="Appl. Environ. Microbiol.">
        <title>Genome analysis of the meat starter culture bacterium Staphylococcus carnosus TM300.</title>
        <authorList>
            <person name="Rosenstein R."/>
            <person name="Nerz C."/>
            <person name="Biswas L."/>
            <person name="Resch A."/>
            <person name="Raddatz G."/>
            <person name="Schuster S.C."/>
            <person name="Goetz F."/>
        </authorList>
    </citation>
    <scope>NUCLEOTIDE SEQUENCE [LARGE SCALE GENOMIC DNA]</scope>
    <source>
        <strain>TM300</strain>
    </source>
</reference>
<gene>
    <name evidence="1" type="primary">serS</name>
    <name type="ordered locus">Sca_2465</name>
</gene>